<proteinExistence type="inferred from homology"/>
<accession>Q3K0K8</accession>
<organism>
    <name type="scientific">Streptococcus agalactiae serotype Ia (strain ATCC 27591 / A909 / CDC SS700)</name>
    <dbReference type="NCBI Taxonomy" id="205921"/>
    <lineage>
        <taxon>Bacteria</taxon>
        <taxon>Bacillati</taxon>
        <taxon>Bacillota</taxon>
        <taxon>Bacilli</taxon>
        <taxon>Lactobacillales</taxon>
        <taxon>Streptococcaceae</taxon>
        <taxon>Streptococcus</taxon>
    </lineage>
</organism>
<protein>
    <recommendedName>
        <fullName evidence="1">Large ribosomal subunit protein uL10</fullName>
    </recommendedName>
    <alternativeName>
        <fullName evidence="2">50S ribosomal protein L10</fullName>
    </alternativeName>
</protein>
<gene>
    <name evidence="1" type="primary">rplJ</name>
    <name type="ordered locus">SAK_1335</name>
</gene>
<keyword id="KW-0687">Ribonucleoprotein</keyword>
<keyword id="KW-0689">Ribosomal protein</keyword>
<keyword id="KW-0694">RNA-binding</keyword>
<keyword id="KW-0699">rRNA-binding</keyword>
<name>RL10_STRA1</name>
<reference key="1">
    <citation type="journal article" date="2005" name="Proc. Natl. Acad. Sci. U.S.A.">
        <title>Genome analysis of multiple pathogenic isolates of Streptococcus agalactiae: implications for the microbial 'pan-genome'.</title>
        <authorList>
            <person name="Tettelin H."/>
            <person name="Masignani V."/>
            <person name="Cieslewicz M.J."/>
            <person name="Donati C."/>
            <person name="Medini D."/>
            <person name="Ward N.L."/>
            <person name="Angiuoli S.V."/>
            <person name="Crabtree J."/>
            <person name="Jones A.L."/>
            <person name="Durkin A.S."/>
            <person name="DeBoy R.T."/>
            <person name="Davidsen T.M."/>
            <person name="Mora M."/>
            <person name="Scarselli M."/>
            <person name="Margarit y Ros I."/>
            <person name="Peterson J.D."/>
            <person name="Hauser C.R."/>
            <person name="Sundaram J.P."/>
            <person name="Nelson W.C."/>
            <person name="Madupu R."/>
            <person name="Brinkac L.M."/>
            <person name="Dodson R.J."/>
            <person name="Rosovitz M.J."/>
            <person name="Sullivan S.A."/>
            <person name="Daugherty S.C."/>
            <person name="Haft D.H."/>
            <person name="Selengut J."/>
            <person name="Gwinn M.L."/>
            <person name="Zhou L."/>
            <person name="Zafar N."/>
            <person name="Khouri H."/>
            <person name="Radune D."/>
            <person name="Dimitrov G."/>
            <person name="Watkins K."/>
            <person name="O'Connor K.J."/>
            <person name="Smith S."/>
            <person name="Utterback T.R."/>
            <person name="White O."/>
            <person name="Rubens C.E."/>
            <person name="Grandi G."/>
            <person name="Madoff L.C."/>
            <person name="Kasper D.L."/>
            <person name="Telford J.L."/>
            <person name="Wessels M.R."/>
            <person name="Rappuoli R."/>
            <person name="Fraser C.M."/>
        </authorList>
    </citation>
    <scope>NUCLEOTIDE SEQUENCE [LARGE SCALE GENOMIC DNA]</scope>
    <source>
        <strain>ATCC 27591 / A909 / CDC SS700</strain>
    </source>
</reference>
<comment type="function">
    <text evidence="1">Forms part of the ribosomal stalk, playing a central role in the interaction of the ribosome with GTP-bound translation factors.</text>
</comment>
<comment type="subunit">
    <text evidence="1">Part of the ribosomal stalk of the 50S ribosomal subunit. The N-terminus interacts with L11 and the large rRNA to form the base of the stalk. The C-terminus forms an elongated spine to which L12 dimers bind in a sequential fashion forming a multimeric L10(L12)X complex.</text>
</comment>
<comment type="similarity">
    <text evidence="1">Belongs to the universal ribosomal protein uL10 family.</text>
</comment>
<evidence type="ECO:0000255" key="1">
    <source>
        <dbReference type="HAMAP-Rule" id="MF_00362"/>
    </source>
</evidence>
<evidence type="ECO:0000305" key="2"/>
<feature type="chain" id="PRO_0000234892" description="Large ribosomal subunit protein uL10">
    <location>
        <begin position="1"/>
        <end position="166"/>
    </location>
</feature>
<dbReference type="EMBL" id="CP000114">
    <property type="protein sequence ID" value="ABA45669.1"/>
    <property type="molecule type" value="Genomic_DNA"/>
</dbReference>
<dbReference type="RefSeq" id="WP_001287285.1">
    <property type="nucleotide sequence ID" value="NC_007432.1"/>
</dbReference>
<dbReference type="SMR" id="Q3K0K8"/>
<dbReference type="KEGG" id="sak:SAK_1335"/>
<dbReference type="HOGENOM" id="CLU_092227_2_0_9"/>
<dbReference type="GO" id="GO:0015934">
    <property type="term" value="C:large ribosomal subunit"/>
    <property type="evidence" value="ECO:0007669"/>
    <property type="project" value="InterPro"/>
</dbReference>
<dbReference type="GO" id="GO:0070180">
    <property type="term" value="F:large ribosomal subunit rRNA binding"/>
    <property type="evidence" value="ECO:0007669"/>
    <property type="project" value="UniProtKB-UniRule"/>
</dbReference>
<dbReference type="GO" id="GO:0003735">
    <property type="term" value="F:structural constituent of ribosome"/>
    <property type="evidence" value="ECO:0007669"/>
    <property type="project" value="InterPro"/>
</dbReference>
<dbReference type="GO" id="GO:0006412">
    <property type="term" value="P:translation"/>
    <property type="evidence" value="ECO:0007669"/>
    <property type="project" value="UniProtKB-UniRule"/>
</dbReference>
<dbReference type="CDD" id="cd05797">
    <property type="entry name" value="Ribosomal_L10"/>
    <property type="match status" value="1"/>
</dbReference>
<dbReference type="FunFam" id="3.30.70.1730:FF:000001">
    <property type="entry name" value="50S ribosomal protein L10"/>
    <property type="match status" value="1"/>
</dbReference>
<dbReference type="Gene3D" id="3.30.70.1730">
    <property type="match status" value="1"/>
</dbReference>
<dbReference type="HAMAP" id="MF_00362">
    <property type="entry name" value="Ribosomal_uL10"/>
    <property type="match status" value="1"/>
</dbReference>
<dbReference type="InterPro" id="IPR001790">
    <property type="entry name" value="Ribosomal_uL10"/>
</dbReference>
<dbReference type="InterPro" id="IPR043141">
    <property type="entry name" value="Ribosomal_uL10-like_sf"/>
</dbReference>
<dbReference type="InterPro" id="IPR022973">
    <property type="entry name" value="Ribosomal_uL10_bac"/>
</dbReference>
<dbReference type="InterPro" id="IPR047865">
    <property type="entry name" value="Ribosomal_uL10_bac_type"/>
</dbReference>
<dbReference type="InterPro" id="IPR002363">
    <property type="entry name" value="Ribosomal_uL10_CS_bac"/>
</dbReference>
<dbReference type="NCBIfam" id="NF000955">
    <property type="entry name" value="PRK00099.1-1"/>
    <property type="match status" value="1"/>
</dbReference>
<dbReference type="PANTHER" id="PTHR11560">
    <property type="entry name" value="39S RIBOSOMAL PROTEIN L10, MITOCHONDRIAL"/>
    <property type="match status" value="1"/>
</dbReference>
<dbReference type="Pfam" id="PF00466">
    <property type="entry name" value="Ribosomal_L10"/>
    <property type="match status" value="1"/>
</dbReference>
<dbReference type="SUPFAM" id="SSF160369">
    <property type="entry name" value="Ribosomal protein L10-like"/>
    <property type="match status" value="1"/>
</dbReference>
<dbReference type="PROSITE" id="PS01109">
    <property type="entry name" value="RIBOSOMAL_L10"/>
    <property type="match status" value="1"/>
</dbReference>
<sequence>MSEAIIAKKAEQVELIAEKMKAAASIVVVDSRGLTVEQDTNLRRSLRESDVEFKVIKNSILIRAAEKAGLEDLKELFVGPSAVAFSNEDVIAPAKVISDFAKDAEALEIKGGSVDGKFTSVEEINALAKLPNKEGMLSMLLSVLQAPVRNVAYAVKAVAEKDEEVA</sequence>